<comment type="function">
    <text evidence="1">Allows the formation of correctly charged Asn-tRNA(Asn) or Gln-tRNA(Gln) through the transamidation of misacylated Asp-tRNA(Asn) or Glu-tRNA(Gln) in organisms which lack either or both of asparaginyl-tRNA or glutaminyl-tRNA synthetases. The reaction takes place in the presence of glutamine and ATP through an activated phospho-Asp-tRNA(Asn) or phospho-Glu-tRNA(Gln).</text>
</comment>
<comment type="catalytic activity">
    <reaction evidence="1">
        <text>L-glutamyl-tRNA(Gln) + L-glutamine + ATP + H2O = L-glutaminyl-tRNA(Gln) + L-glutamate + ADP + phosphate + H(+)</text>
        <dbReference type="Rhea" id="RHEA:17521"/>
        <dbReference type="Rhea" id="RHEA-COMP:9681"/>
        <dbReference type="Rhea" id="RHEA-COMP:9684"/>
        <dbReference type="ChEBI" id="CHEBI:15377"/>
        <dbReference type="ChEBI" id="CHEBI:15378"/>
        <dbReference type="ChEBI" id="CHEBI:29985"/>
        <dbReference type="ChEBI" id="CHEBI:30616"/>
        <dbReference type="ChEBI" id="CHEBI:43474"/>
        <dbReference type="ChEBI" id="CHEBI:58359"/>
        <dbReference type="ChEBI" id="CHEBI:78520"/>
        <dbReference type="ChEBI" id="CHEBI:78521"/>
        <dbReference type="ChEBI" id="CHEBI:456216"/>
    </reaction>
</comment>
<comment type="catalytic activity">
    <reaction evidence="1">
        <text>L-aspartyl-tRNA(Asn) + L-glutamine + ATP + H2O = L-asparaginyl-tRNA(Asn) + L-glutamate + ADP + phosphate + 2 H(+)</text>
        <dbReference type="Rhea" id="RHEA:14513"/>
        <dbReference type="Rhea" id="RHEA-COMP:9674"/>
        <dbReference type="Rhea" id="RHEA-COMP:9677"/>
        <dbReference type="ChEBI" id="CHEBI:15377"/>
        <dbReference type="ChEBI" id="CHEBI:15378"/>
        <dbReference type="ChEBI" id="CHEBI:29985"/>
        <dbReference type="ChEBI" id="CHEBI:30616"/>
        <dbReference type="ChEBI" id="CHEBI:43474"/>
        <dbReference type="ChEBI" id="CHEBI:58359"/>
        <dbReference type="ChEBI" id="CHEBI:78515"/>
        <dbReference type="ChEBI" id="CHEBI:78516"/>
        <dbReference type="ChEBI" id="CHEBI:456216"/>
    </reaction>
</comment>
<comment type="subunit">
    <text evidence="1">Heterotrimer of A, B and C subunits.</text>
</comment>
<comment type="similarity">
    <text evidence="1">Belongs to the GatB/GatE family. GatB subfamily.</text>
</comment>
<gene>
    <name evidence="1" type="primary">gatB</name>
    <name type="ordered locus">SSP0892</name>
</gene>
<reference key="1">
    <citation type="journal article" date="2005" name="Proc. Natl. Acad. Sci. U.S.A.">
        <title>Whole genome sequence of Staphylococcus saprophyticus reveals the pathogenesis of uncomplicated urinary tract infection.</title>
        <authorList>
            <person name="Kuroda M."/>
            <person name="Yamashita A."/>
            <person name="Hirakawa H."/>
            <person name="Kumano M."/>
            <person name="Morikawa K."/>
            <person name="Higashide M."/>
            <person name="Maruyama A."/>
            <person name="Inose Y."/>
            <person name="Matoba K."/>
            <person name="Toh H."/>
            <person name="Kuhara S."/>
            <person name="Hattori M."/>
            <person name="Ohta T."/>
        </authorList>
    </citation>
    <scope>NUCLEOTIDE SEQUENCE [LARGE SCALE GENOMIC DNA]</scope>
    <source>
        <strain>ATCC 15305 / DSM 20229 / NCIMB 8711 / NCTC 7292 / S-41</strain>
    </source>
</reference>
<feature type="chain" id="PRO_0000241279" description="Aspartyl/glutamyl-tRNA(Asn/Gln) amidotransferase subunit B">
    <location>
        <begin position="1"/>
        <end position="475"/>
    </location>
</feature>
<organism>
    <name type="scientific">Staphylococcus saprophyticus subsp. saprophyticus (strain ATCC 15305 / DSM 20229 / NCIMB 8711 / NCTC 7292 / S-41)</name>
    <dbReference type="NCBI Taxonomy" id="342451"/>
    <lineage>
        <taxon>Bacteria</taxon>
        <taxon>Bacillati</taxon>
        <taxon>Bacillota</taxon>
        <taxon>Bacilli</taxon>
        <taxon>Bacillales</taxon>
        <taxon>Staphylococcaceae</taxon>
        <taxon>Staphylococcus</taxon>
    </lineage>
</organism>
<name>GATB_STAS1</name>
<dbReference type="EC" id="6.3.5.-" evidence="1"/>
<dbReference type="EMBL" id="AP008934">
    <property type="protein sequence ID" value="BAE18037.1"/>
    <property type="molecule type" value="Genomic_DNA"/>
</dbReference>
<dbReference type="RefSeq" id="WP_011302768.1">
    <property type="nucleotide sequence ID" value="NZ_MTGA01000031.1"/>
</dbReference>
<dbReference type="SMR" id="Q49YU3"/>
<dbReference type="GeneID" id="3617088"/>
<dbReference type="KEGG" id="ssp:SSP0892"/>
<dbReference type="PATRIC" id="fig|342451.11.peg.891"/>
<dbReference type="eggNOG" id="COG0064">
    <property type="taxonomic scope" value="Bacteria"/>
</dbReference>
<dbReference type="HOGENOM" id="CLU_019240_0_0_9"/>
<dbReference type="OrthoDB" id="9804078at2"/>
<dbReference type="Proteomes" id="UP000006371">
    <property type="component" value="Chromosome"/>
</dbReference>
<dbReference type="GO" id="GO:0050566">
    <property type="term" value="F:asparaginyl-tRNA synthase (glutamine-hydrolyzing) activity"/>
    <property type="evidence" value="ECO:0007669"/>
    <property type="project" value="RHEA"/>
</dbReference>
<dbReference type="GO" id="GO:0005524">
    <property type="term" value="F:ATP binding"/>
    <property type="evidence" value="ECO:0007669"/>
    <property type="project" value="UniProtKB-KW"/>
</dbReference>
<dbReference type="GO" id="GO:0050567">
    <property type="term" value="F:glutaminyl-tRNA synthase (glutamine-hydrolyzing) activity"/>
    <property type="evidence" value="ECO:0007669"/>
    <property type="project" value="UniProtKB-UniRule"/>
</dbReference>
<dbReference type="GO" id="GO:0070681">
    <property type="term" value="P:glutaminyl-tRNAGln biosynthesis via transamidation"/>
    <property type="evidence" value="ECO:0007669"/>
    <property type="project" value="TreeGrafter"/>
</dbReference>
<dbReference type="GO" id="GO:0006412">
    <property type="term" value="P:translation"/>
    <property type="evidence" value="ECO:0007669"/>
    <property type="project" value="UniProtKB-UniRule"/>
</dbReference>
<dbReference type="FunFam" id="1.10.10.410:FF:000001">
    <property type="entry name" value="Aspartyl/glutamyl-tRNA(Asn/Gln) amidotransferase subunit B"/>
    <property type="match status" value="1"/>
</dbReference>
<dbReference type="FunFam" id="1.10.150.380:FF:000001">
    <property type="entry name" value="Aspartyl/glutamyl-tRNA(Asn/Gln) amidotransferase subunit B"/>
    <property type="match status" value="1"/>
</dbReference>
<dbReference type="Gene3D" id="1.10.10.410">
    <property type="match status" value="1"/>
</dbReference>
<dbReference type="Gene3D" id="1.10.150.380">
    <property type="entry name" value="GatB domain, N-terminal subdomain"/>
    <property type="match status" value="1"/>
</dbReference>
<dbReference type="HAMAP" id="MF_00121">
    <property type="entry name" value="GatB"/>
    <property type="match status" value="1"/>
</dbReference>
<dbReference type="InterPro" id="IPR017959">
    <property type="entry name" value="Asn/Gln-tRNA_amidoTrfase_suB/E"/>
</dbReference>
<dbReference type="InterPro" id="IPR006075">
    <property type="entry name" value="Asn/Gln-tRNA_Trfase_suB/E_cat"/>
</dbReference>
<dbReference type="InterPro" id="IPR018027">
    <property type="entry name" value="Asn/Gln_amidotransferase"/>
</dbReference>
<dbReference type="InterPro" id="IPR003789">
    <property type="entry name" value="Asn/Gln_tRNA_amidoTrase-B-like"/>
</dbReference>
<dbReference type="InterPro" id="IPR004413">
    <property type="entry name" value="GatB"/>
</dbReference>
<dbReference type="InterPro" id="IPR042114">
    <property type="entry name" value="GatB_C_1"/>
</dbReference>
<dbReference type="InterPro" id="IPR023168">
    <property type="entry name" value="GatB_Yqey_C_2"/>
</dbReference>
<dbReference type="InterPro" id="IPR017958">
    <property type="entry name" value="Gln-tRNA_amidoTrfase_suB_CS"/>
</dbReference>
<dbReference type="InterPro" id="IPR014746">
    <property type="entry name" value="Gln_synth/guanido_kin_cat_dom"/>
</dbReference>
<dbReference type="NCBIfam" id="TIGR00133">
    <property type="entry name" value="gatB"/>
    <property type="match status" value="1"/>
</dbReference>
<dbReference type="NCBIfam" id="NF004011">
    <property type="entry name" value="PRK05477.1-1"/>
    <property type="match status" value="1"/>
</dbReference>
<dbReference type="NCBIfam" id="NF004012">
    <property type="entry name" value="PRK05477.1-2"/>
    <property type="match status" value="1"/>
</dbReference>
<dbReference type="NCBIfam" id="NF004014">
    <property type="entry name" value="PRK05477.1-4"/>
    <property type="match status" value="1"/>
</dbReference>
<dbReference type="PANTHER" id="PTHR11659">
    <property type="entry name" value="GLUTAMYL-TRNA GLN AMIDOTRANSFERASE SUBUNIT B MITOCHONDRIAL AND PROKARYOTIC PET112-RELATED"/>
    <property type="match status" value="1"/>
</dbReference>
<dbReference type="PANTHER" id="PTHR11659:SF0">
    <property type="entry name" value="GLUTAMYL-TRNA(GLN) AMIDOTRANSFERASE SUBUNIT B, MITOCHONDRIAL"/>
    <property type="match status" value="1"/>
</dbReference>
<dbReference type="Pfam" id="PF02934">
    <property type="entry name" value="GatB_N"/>
    <property type="match status" value="1"/>
</dbReference>
<dbReference type="Pfam" id="PF02637">
    <property type="entry name" value="GatB_Yqey"/>
    <property type="match status" value="1"/>
</dbReference>
<dbReference type="SMART" id="SM00845">
    <property type="entry name" value="GatB_Yqey"/>
    <property type="match status" value="1"/>
</dbReference>
<dbReference type="SUPFAM" id="SSF89095">
    <property type="entry name" value="GatB/YqeY motif"/>
    <property type="match status" value="1"/>
</dbReference>
<dbReference type="SUPFAM" id="SSF55931">
    <property type="entry name" value="Glutamine synthetase/guanido kinase"/>
    <property type="match status" value="1"/>
</dbReference>
<dbReference type="PROSITE" id="PS01234">
    <property type="entry name" value="GATB"/>
    <property type="match status" value="1"/>
</dbReference>
<keyword id="KW-0067">ATP-binding</keyword>
<keyword id="KW-0436">Ligase</keyword>
<keyword id="KW-0547">Nucleotide-binding</keyword>
<keyword id="KW-0648">Protein biosynthesis</keyword>
<keyword id="KW-1185">Reference proteome</keyword>
<protein>
    <recommendedName>
        <fullName evidence="1">Aspartyl/glutamyl-tRNA(Asn/Gln) amidotransferase subunit B</fullName>
        <shortName evidence="1">Asp/Glu-ADT subunit B</shortName>
        <ecNumber evidence="1">6.3.5.-</ecNumber>
    </recommendedName>
</protein>
<accession>Q49YU3</accession>
<evidence type="ECO:0000255" key="1">
    <source>
        <dbReference type="HAMAP-Rule" id="MF_00121"/>
    </source>
</evidence>
<sequence length="475" mass="53829">MHFETVIGLEVHVELKTDSKMFSPAPAHFGAKPNSNTNVIDLAYPGVLPVVNRRAVDWAMRASMALNMEIATESKFDRKNYFYPDNPKAYQISQFDQPIGENGYIDIEVDGETKRIGITRLHMEEDAGKSTHKDGYSLVDLNRQGTPLIEIVSEPDIRSPQEAYAYLEKLRSIIQYTGVSDCKMEEGSLRCDANISLRPYGQEEFGTKAELKNLNSFTYVRKGLEYEEKRQEEELLNGGEILQETRRFDESNGKTLLMRVKEGSDDYRYFPEPDIVPLYVDEEWKERVRQTIPELPDERKEKYVNQYGLPAYDAHVLTLTKEMSDFFEGAVAEGADVKLTSNWLMGGVNEYLNKNQIDLLDTKLTPENLAGMIKLIEDGTMSSKIAKKVFPELAENGGDAKQIMEDKGLVQISDEATLLKFVNEALDNNEQSIEDYKNGKGKAMGFLVGQIMKASKGQANPQLVNQLLKQELDKR</sequence>
<proteinExistence type="inferred from homology"/>